<proteinExistence type="inferred from homology"/>
<evidence type="ECO:0000255" key="1">
    <source>
        <dbReference type="HAMAP-Rule" id="MF_00811"/>
    </source>
</evidence>
<gene>
    <name evidence="1" type="primary">dapD</name>
    <name type="ordered locus">plu0669</name>
</gene>
<comment type="catalytic activity">
    <reaction evidence="1">
        <text>(S)-2,3,4,5-tetrahydrodipicolinate + succinyl-CoA + H2O = (S)-2-succinylamino-6-oxoheptanedioate + CoA</text>
        <dbReference type="Rhea" id="RHEA:17325"/>
        <dbReference type="ChEBI" id="CHEBI:15377"/>
        <dbReference type="ChEBI" id="CHEBI:15685"/>
        <dbReference type="ChEBI" id="CHEBI:16845"/>
        <dbReference type="ChEBI" id="CHEBI:57287"/>
        <dbReference type="ChEBI" id="CHEBI:57292"/>
        <dbReference type="EC" id="2.3.1.117"/>
    </reaction>
</comment>
<comment type="pathway">
    <text evidence="1">Amino-acid biosynthesis; L-lysine biosynthesis via DAP pathway; LL-2,6-diaminopimelate from (S)-tetrahydrodipicolinate (succinylase route): step 1/3.</text>
</comment>
<comment type="subunit">
    <text evidence="1">Homotrimer.</text>
</comment>
<comment type="subcellular location">
    <subcellularLocation>
        <location evidence="1">Cytoplasm</location>
    </subcellularLocation>
</comment>
<comment type="similarity">
    <text evidence="1">Belongs to the transferase hexapeptide repeat family.</text>
</comment>
<name>DAPD_PHOLL</name>
<dbReference type="EC" id="2.3.1.117" evidence="1"/>
<dbReference type="EMBL" id="BX571861">
    <property type="protein sequence ID" value="CAE12964.1"/>
    <property type="molecule type" value="Genomic_DNA"/>
</dbReference>
<dbReference type="RefSeq" id="WP_011145045.1">
    <property type="nucleotide sequence ID" value="NC_005126.1"/>
</dbReference>
<dbReference type="SMR" id="Q7N8Q0"/>
<dbReference type="STRING" id="243265.plu0669"/>
<dbReference type="GeneID" id="48846958"/>
<dbReference type="KEGG" id="plu:plu0669"/>
<dbReference type="eggNOG" id="COG2171">
    <property type="taxonomic scope" value="Bacteria"/>
</dbReference>
<dbReference type="HOGENOM" id="CLU_050859_0_1_6"/>
<dbReference type="OrthoDB" id="9775362at2"/>
<dbReference type="UniPathway" id="UPA00034">
    <property type="reaction ID" value="UER00019"/>
</dbReference>
<dbReference type="Proteomes" id="UP000002514">
    <property type="component" value="Chromosome"/>
</dbReference>
<dbReference type="GO" id="GO:0005737">
    <property type="term" value="C:cytoplasm"/>
    <property type="evidence" value="ECO:0007669"/>
    <property type="project" value="UniProtKB-SubCell"/>
</dbReference>
<dbReference type="GO" id="GO:0008666">
    <property type="term" value="F:2,3,4,5-tetrahydropyridine-2,6-dicarboxylate N-succinyltransferase activity"/>
    <property type="evidence" value="ECO:0007669"/>
    <property type="project" value="UniProtKB-UniRule"/>
</dbReference>
<dbReference type="GO" id="GO:0016779">
    <property type="term" value="F:nucleotidyltransferase activity"/>
    <property type="evidence" value="ECO:0007669"/>
    <property type="project" value="TreeGrafter"/>
</dbReference>
<dbReference type="GO" id="GO:0019877">
    <property type="term" value="P:diaminopimelate biosynthetic process"/>
    <property type="evidence" value="ECO:0007669"/>
    <property type="project" value="UniProtKB-UniRule"/>
</dbReference>
<dbReference type="GO" id="GO:0009089">
    <property type="term" value="P:lysine biosynthetic process via diaminopimelate"/>
    <property type="evidence" value="ECO:0007669"/>
    <property type="project" value="UniProtKB-UniRule"/>
</dbReference>
<dbReference type="CDD" id="cd03350">
    <property type="entry name" value="LbH_THP_succinylT"/>
    <property type="match status" value="1"/>
</dbReference>
<dbReference type="FunFam" id="2.160.10.10:FF:000004">
    <property type="entry name" value="2,3,4,5-tetrahydropyridine-2,6-dicarboxylate N-succinyltransferase"/>
    <property type="match status" value="1"/>
</dbReference>
<dbReference type="Gene3D" id="2.160.10.10">
    <property type="entry name" value="Hexapeptide repeat proteins"/>
    <property type="match status" value="1"/>
</dbReference>
<dbReference type="Gene3D" id="1.10.166.10">
    <property type="entry name" value="Tetrahydrodipicolinate-N-succinyltransferase, N-terminal domain"/>
    <property type="match status" value="1"/>
</dbReference>
<dbReference type="HAMAP" id="MF_00811">
    <property type="entry name" value="DapD"/>
    <property type="match status" value="1"/>
</dbReference>
<dbReference type="InterPro" id="IPR005664">
    <property type="entry name" value="DapD_Trfase_Hexpep_rpt_fam"/>
</dbReference>
<dbReference type="InterPro" id="IPR001451">
    <property type="entry name" value="Hexapep"/>
</dbReference>
<dbReference type="InterPro" id="IPR023180">
    <property type="entry name" value="THP_succinylTrfase_dom1"/>
</dbReference>
<dbReference type="InterPro" id="IPR037133">
    <property type="entry name" value="THP_succinylTrfase_N_sf"/>
</dbReference>
<dbReference type="InterPro" id="IPR011004">
    <property type="entry name" value="Trimer_LpxA-like_sf"/>
</dbReference>
<dbReference type="NCBIfam" id="TIGR00965">
    <property type="entry name" value="dapD"/>
    <property type="match status" value="1"/>
</dbReference>
<dbReference type="NCBIfam" id="NF008808">
    <property type="entry name" value="PRK11830.1"/>
    <property type="match status" value="1"/>
</dbReference>
<dbReference type="PANTHER" id="PTHR19136:SF52">
    <property type="entry name" value="2,3,4,5-TETRAHYDROPYRIDINE-2,6-DICARBOXYLATE N-SUCCINYLTRANSFERASE"/>
    <property type="match status" value="1"/>
</dbReference>
<dbReference type="PANTHER" id="PTHR19136">
    <property type="entry name" value="MOLYBDENUM COFACTOR GUANYLYLTRANSFERASE"/>
    <property type="match status" value="1"/>
</dbReference>
<dbReference type="Pfam" id="PF14602">
    <property type="entry name" value="Hexapep_2"/>
    <property type="match status" value="1"/>
</dbReference>
<dbReference type="Pfam" id="PF14805">
    <property type="entry name" value="THDPS_N_2"/>
    <property type="match status" value="1"/>
</dbReference>
<dbReference type="SUPFAM" id="SSF51161">
    <property type="entry name" value="Trimeric LpxA-like enzymes"/>
    <property type="match status" value="1"/>
</dbReference>
<sequence length="274" mass="29948">MQQLQSIIESAFENRATLTPATVNHETRDAVTQVINLLDSGKLRVAEKIDGQWVTHQWLKMAVLLSFRINENQIIDGTESRYFDKVPMKFSDYDQTRFEKEGFRVVPPAAARQGAFIARNCVLMPSYVNIGAYVDEGTMVDTWTTVGSCAQIGKNVHLSGGVGIGGVLEPLQANPTIIEDNCFIGARSEIVEGVIIEEGSVISMGVYIGQSTKIYDRETGEIHYGRVPAGSVVVSGNLPSKDGSYSLYCAVIVKKVDAKTQGKVGINELLRSID</sequence>
<protein>
    <recommendedName>
        <fullName evidence="1">2,3,4,5-tetrahydropyridine-2,6-dicarboxylate N-succinyltransferase</fullName>
        <ecNumber evidence="1">2.3.1.117</ecNumber>
    </recommendedName>
    <alternativeName>
        <fullName evidence="1">Tetrahydrodipicolinate N-succinyltransferase</fullName>
        <shortName evidence="1">THDP succinyltransferase</shortName>
        <shortName evidence="1">THP succinyltransferase</shortName>
        <shortName evidence="1">Tetrahydropicolinate succinylase</shortName>
    </alternativeName>
</protein>
<feature type="chain" id="PRO_0000196956" description="2,3,4,5-tetrahydropyridine-2,6-dicarboxylate N-succinyltransferase">
    <location>
        <begin position="1"/>
        <end position="274"/>
    </location>
</feature>
<feature type="binding site" evidence="1">
    <location>
        <position position="104"/>
    </location>
    <ligand>
        <name>substrate</name>
    </ligand>
</feature>
<feature type="binding site" evidence="1">
    <location>
        <position position="141"/>
    </location>
    <ligand>
        <name>substrate</name>
    </ligand>
</feature>
<organism>
    <name type="scientific">Photorhabdus laumondii subsp. laumondii (strain DSM 15139 / CIP 105565 / TT01)</name>
    <name type="common">Photorhabdus luminescens subsp. laumondii</name>
    <dbReference type="NCBI Taxonomy" id="243265"/>
    <lineage>
        <taxon>Bacteria</taxon>
        <taxon>Pseudomonadati</taxon>
        <taxon>Pseudomonadota</taxon>
        <taxon>Gammaproteobacteria</taxon>
        <taxon>Enterobacterales</taxon>
        <taxon>Morganellaceae</taxon>
        <taxon>Photorhabdus</taxon>
    </lineage>
</organism>
<accession>Q7N8Q0</accession>
<reference key="1">
    <citation type="journal article" date="2003" name="Nat. Biotechnol.">
        <title>The genome sequence of the entomopathogenic bacterium Photorhabdus luminescens.</title>
        <authorList>
            <person name="Duchaud E."/>
            <person name="Rusniok C."/>
            <person name="Frangeul L."/>
            <person name="Buchrieser C."/>
            <person name="Givaudan A."/>
            <person name="Taourit S."/>
            <person name="Bocs S."/>
            <person name="Boursaux-Eude C."/>
            <person name="Chandler M."/>
            <person name="Charles J.-F."/>
            <person name="Dassa E."/>
            <person name="Derose R."/>
            <person name="Derzelle S."/>
            <person name="Freyssinet G."/>
            <person name="Gaudriault S."/>
            <person name="Medigue C."/>
            <person name="Lanois A."/>
            <person name="Powell K."/>
            <person name="Siguier P."/>
            <person name="Vincent R."/>
            <person name="Wingate V."/>
            <person name="Zouine M."/>
            <person name="Glaser P."/>
            <person name="Boemare N."/>
            <person name="Danchin A."/>
            <person name="Kunst F."/>
        </authorList>
    </citation>
    <scope>NUCLEOTIDE SEQUENCE [LARGE SCALE GENOMIC DNA]</scope>
    <source>
        <strain>DSM 15139 / CIP 105565 / TT01</strain>
    </source>
</reference>
<keyword id="KW-0012">Acyltransferase</keyword>
<keyword id="KW-0028">Amino-acid biosynthesis</keyword>
<keyword id="KW-0963">Cytoplasm</keyword>
<keyword id="KW-0220">Diaminopimelate biosynthesis</keyword>
<keyword id="KW-0457">Lysine biosynthesis</keyword>
<keyword id="KW-1185">Reference proteome</keyword>
<keyword id="KW-0677">Repeat</keyword>
<keyword id="KW-0808">Transferase</keyword>